<gene>
    <name evidence="1" type="primary">accA</name>
    <name type="ordered locus">SG0236</name>
</gene>
<comment type="function">
    <text evidence="1">Component of the acetyl coenzyme A carboxylase (ACC) complex. First, biotin carboxylase catalyzes the carboxylation of biotin on its carrier protein (BCCP) and then the CO(2) group is transferred by the carboxyltransferase to acetyl-CoA to form malonyl-CoA.</text>
</comment>
<comment type="catalytic activity">
    <reaction evidence="1">
        <text>N(6)-carboxybiotinyl-L-lysyl-[protein] + acetyl-CoA = N(6)-biotinyl-L-lysyl-[protein] + malonyl-CoA</text>
        <dbReference type="Rhea" id="RHEA:54728"/>
        <dbReference type="Rhea" id="RHEA-COMP:10505"/>
        <dbReference type="Rhea" id="RHEA-COMP:10506"/>
        <dbReference type="ChEBI" id="CHEBI:57288"/>
        <dbReference type="ChEBI" id="CHEBI:57384"/>
        <dbReference type="ChEBI" id="CHEBI:83144"/>
        <dbReference type="ChEBI" id="CHEBI:83145"/>
        <dbReference type="EC" id="2.1.3.15"/>
    </reaction>
</comment>
<comment type="pathway">
    <text evidence="1">Lipid metabolism; malonyl-CoA biosynthesis; malonyl-CoA from acetyl-CoA: step 1/1.</text>
</comment>
<comment type="subunit">
    <text evidence="1">Acetyl-CoA carboxylase is a heterohexamer composed of biotin carboxyl carrier protein (AccB), biotin carboxylase (AccC) and two subunits each of ACCase subunit alpha (AccA) and ACCase subunit beta (AccD).</text>
</comment>
<comment type="subcellular location">
    <subcellularLocation>
        <location evidence="1">Cytoplasm</location>
    </subcellularLocation>
</comment>
<comment type="similarity">
    <text evidence="1">Belongs to the AccA family.</text>
</comment>
<proteinExistence type="inferred from homology"/>
<reference key="1">
    <citation type="journal article" date="2008" name="Genome Res.">
        <title>Comparative genome analysis of Salmonella enteritidis PT4 and Salmonella gallinarum 287/91 provides insights into evolutionary and host adaptation pathways.</title>
        <authorList>
            <person name="Thomson N.R."/>
            <person name="Clayton D.J."/>
            <person name="Windhorst D."/>
            <person name="Vernikos G."/>
            <person name="Davidson S."/>
            <person name="Churcher C."/>
            <person name="Quail M.A."/>
            <person name="Stevens M."/>
            <person name="Jones M.A."/>
            <person name="Watson M."/>
            <person name="Barron A."/>
            <person name="Layton A."/>
            <person name="Pickard D."/>
            <person name="Kingsley R.A."/>
            <person name="Bignell A."/>
            <person name="Clark L."/>
            <person name="Harris B."/>
            <person name="Ormond D."/>
            <person name="Abdellah Z."/>
            <person name="Brooks K."/>
            <person name="Cherevach I."/>
            <person name="Chillingworth T."/>
            <person name="Woodward J."/>
            <person name="Norberczak H."/>
            <person name="Lord A."/>
            <person name="Arrowsmith C."/>
            <person name="Jagels K."/>
            <person name="Moule S."/>
            <person name="Mungall K."/>
            <person name="Saunders M."/>
            <person name="Whitehead S."/>
            <person name="Chabalgoity J.A."/>
            <person name="Maskell D."/>
            <person name="Humphreys T."/>
            <person name="Roberts M."/>
            <person name="Barrow P.A."/>
            <person name="Dougan G."/>
            <person name="Parkhill J."/>
        </authorList>
    </citation>
    <scope>NUCLEOTIDE SEQUENCE [LARGE SCALE GENOMIC DNA]</scope>
    <source>
        <strain>287/91 / NCTC 13346</strain>
    </source>
</reference>
<protein>
    <recommendedName>
        <fullName evidence="1">Acetyl-coenzyme A carboxylase carboxyl transferase subunit alpha</fullName>
        <shortName evidence="1">ACCase subunit alpha</shortName>
        <shortName evidence="1">Acetyl-CoA carboxylase carboxyltransferase subunit alpha</shortName>
        <ecNumber evidence="1">2.1.3.15</ecNumber>
    </recommendedName>
</protein>
<accession>B5R5I8</accession>
<organism>
    <name type="scientific">Salmonella gallinarum (strain 287/91 / NCTC 13346)</name>
    <dbReference type="NCBI Taxonomy" id="550538"/>
    <lineage>
        <taxon>Bacteria</taxon>
        <taxon>Pseudomonadati</taxon>
        <taxon>Pseudomonadota</taxon>
        <taxon>Gammaproteobacteria</taxon>
        <taxon>Enterobacterales</taxon>
        <taxon>Enterobacteriaceae</taxon>
        <taxon>Salmonella</taxon>
    </lineage>
</organism>
<dbReference type="EC" id="2.1.3.15" evidence="1"/>
<dbReference type="EMBL" id="AM933173">
    <property type="protein sequence ID" value="CAR36143.1"/>
    <property type="molecule type" value="Genomic_DNA"/>
</dbReference>
<dbReference type="RefSeq" id="WP_000055753.1">
    <property type="nucleotide sequence ID" value="NC_011274.1"/>
</dbReference>
<dbReference type="SMR" id="B5R5I8"/>
<dbReference type="KEGG" id="seg:SG0236"/>
<dbReference type="HOGENOM" id="CLU_015486_0_2_6"/>
<dbReference type="UniPathway" id="UPA00655">
    <property type="reaction ID" value="UER00711"/>
</dbReference>
<dbReference type="Proteomes" id="UP000008321">
    <property type="component" value="Chromosome"/>
</dbReference>
<dbReference type="GO" id="GO:0009317">
    <property type="term" value="C:acetyl-CoA carboxylase complex"/>
    <property type="evidence" value="ECO:0007669"/>
    <property type="project" value="InterPro"/>
</dbReference>
<dbReference type="GO" id="GO:0003989">
    <property type="term" value="F:acetyl-CoA carboxylase activity"/>
    <property type="evidence" value="ECO:0007669"/>
    <property type="project" value="InterPro"/>
</dbReference>
<dbReference type="GO" id="GO:0005524">
    <property type="term" value="F:ATP binding"/>
    <property type="evidence" value="ECO:0007669"/>
    <property type="project" value="UniProtKB-KW"/>
</dbReference>
<dbReference type="GO" id="GO:0016743">
    <property type="term" value="F:carboxyl- or carbamoyltransferase activity"/>
    <property type="evidence" value="ECO:0007669"/>
    <property type="project" value="UniProtKB-UniRule"/>
</dbReference>
<dbReference type="GO" id="GO:0006633">
    <property type="term" value="P:fatty acid biosynthetic process"/>
    <property type="evidence" value="ECO:0007669"/>
    <property type="project" value="UniProtKB-KW"/>
</dbReference>
<dbReference type="GO" id="GO:2001295">
    <property type="term" value="P:malonyl-CoA biosynthetic process"/>
    <property type="evidence" value="ECO:0007669"/>
    <property type="project" value="UniProtKB-UniRule"/>
</dbReference>
<dbReference type="FunFam" id="3.90.226.10:FF:000008">
    <property type="entry name" value="Acetyl-coenzyme A carboxylase carboxyl transferase subunit alpha"/>
    <property type="match status" value="1"/>
</dbReference>
<dbReference type="Gene3D" id="3.90.226.10">
    <property type="entry name" value="2-enoyl-CoA Hydratase, Chain A, domain 1"/>
    <property type="match status" value="1"/>
</dbReference>
<dbReference type="HAMAP" id="MF_00823">
    <property type="entry name" value="AcetylCoA_CT_alpha"/>
    <property type="match status" value="1"/>
</dbReference>
<dbReference type="InterPro" id="IPR001095">
    <property type="entry name" value="Acetyl_CoA_COase_a_su"/>
</dbReference>
<dbReference type="InterPro" id="IPR029045">
    <property type="entry name" value="ClpP/crotonase-like_dom_sf"/>
</dbReference>
<dbReference type="InterPro" id="IPR011763">
    <property type="entry name" value="COA_CT_C"/>
</dbReference>
<dbReference type="NCBIfam" id="TIGR00513">
    <property type="entry name" value="accA"/>
    <property type="match status" value="1"/>
</dbReference>
<dbReference type="NCBIfam" id="NF041504">
    <property type="entry name" value="AccA_sub"/>
    <property type="match status" value="1"/>
</dbReference>
<dbReference type="NCBIfam" id="NF004344">
    <property type="entry name" value="PRK05724.1"/>
    <property type="match status" value="1"/>
</dbReference>
<dbReference type="PANTHER" id="PTHR42853">
    <property type="entry name" value="ACETYL-COENZYME A CARBOXYLASE CARBOXYL TRANSFERASE SUBUNIT ALPHA"/>
    <property type="match status" value="1"/>
</dbReference>
<dbReference type="PANTHER" id="PTHR42853:SF3">
    <property type="entry name" value="ACETYL-COENZYME A CARBOXYLASE CARBOXYL TRANSFERASE SUBUNIT ALPHA, CHLOROPLASTIC"/>
    <property type="match status" value="1"/>
</dbReference>
<dbReference type="Pfam" id="PF03255">
    <property type="entry name" value="ACCA"/>
    <property type="match status" value="1"/>
</dbReference>
<dbReference type="PRINTS" id="PR01069">
    <property type="entry name" value="ACCCTRFRASEA"/>
</dbReference>
<dbReference type="SUPFAM" id="SSF52096">
    <property type="entry name" value="ClpP/crotonase"/>
    <property type="match status" value="1"/>
</dbReference>
<dbReference type="PROSITE" id="PS50989">
    <property type="entry name" value="COA_CT_CTER"/>
    <property type="match status" value="1"/>
</dbReference>
<keyword id="KW-0067">ATP-binding</keyword>
<keyword id="KW-0963">Cytoplasm</keyword>
<keyword id="KW-0275">Fatty acid biosynthesis</keyword>
<keyword id="KW-0276">Fatty acid metabolism</keyword>
<keyword id="KW-0444">Lipid biosynthesis</keyword>
<keyword id="KW-0443">Lipid metabolism</keyword>
<keyword id="KW-0547">Nucleotide-binding</keyword>
<keyword id="KW-0808">Transferase</keyword>
<feature type="chain" id="PRO_1000134517" description="Acetyl-coenzyme A carboxylase carboxyl transferase subunit alpha">
    <location>
        <begin position="1"/>
        <end position="319"/>
    </location>
</feature>
<feature type="domain" description="CoA carboxyltransferase C-terminal" evidence="2">
    <location>
        <begin position="35"/>
        <end position="296"/>
    </location>
</feature>
<evidence type="ECO:0000255" key="1">
    <source>
        <dbReference type="HAMAP-Rule" id="MF_00823"/>
    </source>
</evidence>
<evidence type="ECO:0000255" key="2">
    <source>
        <dbReference type="PROSITE-ProRule" id="PRU01137"/>
    </source>
</evidence>
<sequence length="319" mass="35344">MSLNFLDFEQPIAELEAKIDSLTAVSRQDEKLDINIDEEVHRLREKSVELTRKIFADLGAWQVAQLARHPQRPYTLDYVRLAFDEFDELAGDRAYADDKAIVGGIARLEGRPVMIIGHQKGRETKEKIRRNFGMPAPEGYRKALRLMEMAERFNMPIITFIDTPGAYPGVGAEERGQSEAIARNLREMSRLNVPVICTVIGEGGSGGALAIGVGDKVNMLQYSTYSVISPEGCASILWKSADKAPLAAEAMGIIAPRLKELKLIDSIIPEPLGGAHRNPEAMAASLKAQLLEDLADLDVLSTDDLKNRRYQRLMSYGYA</sequence>
<name>ACCA_SALG2</name>